<organism>
    <name type="scientific">Mannheimia succiniciproducens (strain KCTC 0769BP / MBEL55E)</name>
    <dbReference type="NCBI Taxonomy" id="221988"/>
    <lineage>
        <taxon>Bacteria</taxon>
        <taxon>Pseudomonadati</taxon>
        <taxon>Pseudomonadota</taxon>
        <taxon>Gammaproteobacteria</taxon>
        <taxon>Pasteurellales</taxon>
        <taxon>Pasteurellaceae</taxon>
        <taxon>Basfia</taxon>
    </lineage>
</organism>
<proteinExistence type="inferred from homology"/>
<protein>
    <recommendedName>
        <fullName evidence="2">GTP cyclohydrolase 1</fullName>
        <ecNumber evidence="2">3.5.4.16</ecNumber>
    </recommendedName>
    <alternativeName>
        <fullName evidence="2">GTP cyclohydrolase I</fullName>
        <shortName evidence="2">GTP-CH-I</shortName>
    </alternativeName>
</protein>
<accession>Q65TR0</accession>
<reference key="1">
    <citation type="journal article" date="2004" name="Nat. Biotechnol.">
        <title>The genome sequence of the capnophilic rumen bacterium Mannheimia succiniciproducens.</title>
        <authorList>
            <person name="Hong S.H."/>
            <person name="Kim J.S."/>
            <person name="Lee S.Y."/>
            <person name="In Y.H."/>
            <person name="Choi S.S."/>
            <person name="Rih J.-K."/>
            <person name="Kim C.H."/>
            <person name="Jeong H."/>
            <person name="Hur C.G."/>
            <person name="Kim J.J."/>
        </authorList>
    </citation>
    <scope>NUCLEOTIDE SEQUENCE [LARGE SCALE GENOMIC DNA]</scope>
    <source>
        <strain>KCTC 0769BP / MBEL55E</strain>
    </source>
</reference>
<feature type="chain" id="PRO_1000043706" description="GTP cyclohydrolase 1">
    <location>
        <begin position="1"/>
        <end position="218"/>
    </location>
</feature>
<feature type="binding site" evidence="2">
    <location>
        <position position="109"/>
    </location>
    <ligand>
        <name>Zn(2+)</name>
        <dbReference type="ChEBI" id="CHEBI:29105"/>
    </ligand>
</feature>
<feature type="binding site" evidence="2">
    <location>
        <position position="112"/>
    </location>
    <ligand>
        <name>Zn(2+)</name>
        <dbReference type="ChEBI" id="CHEBI:29105"/>
    </ligand>
</feature>
<feature type="binding site" evidence="2">
    <location>
        <position position="180"/>
    </location>
    <ligand>
        <name>Zn(2+)</name>
        <dbReference type="ChEBI" id="CHEBI:29105"/>
    </ligand>
</feature>
<comment type="catalytic activity">
    <reaction evidence="2">
        <text>GTP + H2O = 7,8-dihydroneopterin 3'-triphosphate + formate + H(+)</text>
        <dbReference type="Rhea" id="RHEA:17473"/>
        <dbReference type="ChEBI" id="CHEBI:15377"/>
        <dbReference type="ChEBI" id="CHEBI:15378"/>
        <dbReference type="ChEBI" id="CHEBI:15740"/>
        <dbReference type="ChEBI" id="CHEBI:37565"/>
        <dbReference type="ChEBI" id="CHEBI:58462"/>
        <dbReference type="EC" id="3.5.4.16"/>
    </reaction>
</comment>
<comment type="pathway">
    <text evidence="2">Cofactor biosynthesis; 7,8-dihydroneopterin triphosphate biosynthesis; 7,8-dihydroneopterin triphosphate from GTP: step 1/1.</text>
</comment>
<comment type="subunit">
    <text evidence="1">Toroid-shaped homodecamer, composed of two pentamers of five dimers.</text>
</comment>
<comment type="similarity">
    <text evidence="2">Belongs to the GTP cyclohydrolase I family.</text>
</comment>
<evidence type="ECO:0000250" key="1"/>
<evidence type="ECO:0000255" key="2">
    <source>
        <dbReference type="HAMAP-Rule" id="MF_00223"/>
    </source>
</evidence>
<name>GCH1_MANSM</name>
<sequence>MSRISAEAEKVRHALIEKGIETPMIALTKSKNERRIGIENRMREVMQLIGLDLTDDSLEETPVRLAKMFIDEIFSGLDYTNFPKITNIENRMKVSEMVLVNDVTLTSTCEHHFVTIDGLVSVAYYPKKWVIGLSKINRVVQFFAQRPQVQERLTEQILLAFQTILETEDVAVYMKATHFCVKCRGIKDTNSYTVTSAFGGVFLEDRETRKEFLSLINK</sequence>
<gene>
    <name evidence="2" type="primary">folE</name>
    <name type="ordered locus">MS1043</name>
</gene>
<keyword id="KW-0342">GTP-binding</keyword>
<keyword id="KW-0378">Hydrolase</keyword>
<keyword id="KW-0479">Metal-binding</keyword>
<keyword id="KW-0547">Nucleotide-binding</keyword>
<keyword id="KW-0554">One-carbon metabolism</keyword>
<keyword id="KW-0862">Zinc</keyword>
<dbReference type="EC" id="3.5.4.16" evidence="2"/>
<dbReference type="EMBL" id="AE016827">
    <property type="protein sequence ID" value="AAU37650.1"/>
    <property type="molecule type" value="Genomic_DNA"/>
</dbReference>
<dbReference type="RefSeq" id="WP_011200219.1">
    <property type="nucleotide sequence ID" value="NC_006300.1"/>
</dbReference>
<dbReference type="SMR" id="Q65TR0"/>
<dbReference type="STRING" id="221988.MS1043"/>
<dbReference type="KEGG" id="msu:MS1043"/>
<dbReference type="eggNOG" id="COG0302">
    <property type="taxonomic scope" value="Bacteria"/>
</dbReference>
<dbReference type="HOGENOM" id="CLU_049768_3_2_6"/>
<dbReference type="OrthoDB" id="9801207at2"/>
<dbReference type="UniPathway" id="UPA00848">
    <property type="reaction ID" value="UER00151"/>
</dbReference>
<dbReference type="Proteomes" id="UP000000607">
    <property type="component" value="Chromosome"/>
</dbReference>
<dbReference type="GO" id="GO:0005737">
    <property type="term" value="C:cytoplasm"/>
    <property type="evidence" value="ECO:0007669"/>
    <property type="project" value="TreeGrafter"/>
</dbReference>
<dbReference type="GO" id="GO:0005525">
    <property type="term" value="F:GTP binding"/>
    <property type="evidence" value="ECO:0007669"/>
    <property type="project" value="UniProtKB-KW"/>
</dbReference>
<dbReference type="GO" id="GO:0003934">
    <property type="term" value="F:GTP cyclohydrolase I activity"/>
    <property type="evidence" value="ECO:0007669"/>
    <property type="project" value="UniProtKB-UniRule"/>
</dbReference>
<dbReference type="GO" id="GO:0008270">
    <property type="term" value="F:zinc ion binding"/>
    <property type="evidence" value="ECO:0007669"/>
    <property type="project" value="UniProtKB-UniRule"/>
</dbReference>
<dbReference type="GO" id="GO:0006730">
    <property type="term" value="P:one-carbon metabolic process"/>
    <property type="evidence" value="ECO:0007669"/>
    <property type="project" value="UniProtKB-UniRule"/>
</dbReference>
<dbReference type="GO" id="GO:0006729">
    <property type="term" value="P:tetrahydrobiopterin biosynthetic process"/>
    <property type="evidence" value="ECO:0007669"/>
    <property type="project" value="TreeGrafter"/>
</dbReference>
<dbReference type="GO" id="GO:0046654">
    <property type="term" value="P:tetrahydrofolate biosynthetic process"/>
    <property type="evidence" value="ECO:0007669"/>
    <property type="project" value="UniProtKB-UniRule"/>
</dbReference>
<dbReference type="FunFam" id="3.30.1130.10:FF:000001">
    <property type="entry name" value="GTP cyclohydrolase 1"/>
    <property type="match status" value="1"/>
</dbReference>
<dbReference type="Gene3D" id="1.10.286.10">
    <property type="match status" value="1"/>
</dbReference>
<dbReference type="Gene3D" id="3.30.1130.10">
    <property type="match status" value="1"/>
</dbReference>
<dbReference type="HAMAP" id="MF_00223">
    <property type="entry name" value="FolE"/>
    <property type="match status" value="1"/>
</dbReference>
<dbReference type="InterPro" id="IPR043133">
    <property type="entry name" value="GTP-CH-I_C/QueF"/>
</dbReference>
<dbReference type="InterPro" id="IPR043134">
    <property type="entry name" value="GTP-CH-I_N"/>
</dbReference>
<dbReference type="InterPro" id="IPR001474">
    <property type="entry name" value="GTP_CycHdrlase_I"/>
</dbReference>
<dbReference type="InterPro" id="IPR018234">
    <property type="entry name" value="GTP_CycHdrlase_I_CS"/>
</dbReference>
<dbReference type="InterPro" id="IPR020602">
    <property type="entry name" value="GTP_CycHdrlase_I_dom"/>
</dbReference>
<dbReference type="NCBIfam" id="TIGR00063">
    <property type="entry name" value="folE"/>
    <property type="match status" value="1"/>
</dbReference>
<dbReference type="NCBIfam" id="NF006824">
    <property type="entry name" value="PRK09347.1-1"/>
    <property type="match status" value="1"/>
</dbReference>
<dbReference type="NCBIfam" id="NF006826">
    <property type="entry name" value="PRK09347.1-3"/>
    <property type="match status" value="1"/>
</dbReference>
<dbReference type="PANTHER" id="PTHR11109:SF7">
    <property type="entry name" value="GTP CYCLOHYDROLASE 1"/>
    <property type="match status" value="1"/>
</dbReference>
<dbReference type="PANTHER" id="PTHR11109">
    <property type="entry name" value="GTP CYCLOHYDROLASE I"/>
    <property type="match status" value="1"/>
</dbReference>
<dbReference type="Pfam" id="PF01227">
    <property type="entry name" value="GTP_cyclohydroI"/>
    <property type="match status" value="1"/>
</dbReference>
<dbReference type="SUPFAM" id="SSF55620">
    <property type="entry name" value="Tetrahydrobiopterin biosynthesis enzymes-like"/>
    <property type="match status" value="1"/>
</dbReference>
<dbReference type="PROSITE" id="PS00859">
    <property type="entry name" value="GTP_CYCLOHYDROL_1_1"/>
    <property type="match status" value="1"/>
</dbReference>
<dbReference type="PROSITE" id="PS00860">
    <property type="entry name" value="GTP_CYCLOHYDROL_1_2"/>
    <property type="match status" value="1"/>
</dbReference>